<organism>
    <name type="scientific">Haloquadratum walsbyi (strain DSM 16790 / HBSQ001)</name>
    <dbReference type="NCBI Taxonomy" id="362976"/>
    <lineage>
        <taxon>Archaea</taxon>
        <taxon>Methanobacteriati</taxon>
        <taxon>Methanobacteriota</taxon>
        <taxon>Stenosarchaea group</taxon>
        <taxon>Halobacteria</taxon>
        <taxon>Halobacteriales</taxon>
        <taxon>Haloferacaceae</taxon>
        <taxon>Haloquadratum</taxon>
    </lineage>
</organism>
<evidence type="ECO:0000255" key="1">
    <source>
        <dbReference type="HAMAP-Rule" id="MF_02075"/>
    </source>
</evidence>
<sequence>MQDRTLTAEVTPGDEITVAGWVHEIRDLGGIAFLILRDRSGKIQIKFEKDEMNDEIVQTGLDVPRESVISITGVADDEPRAPTDVEIVPTAIEVLSSADTELPLDPSGKVNADLSTRLDNRTLDLRKKEVKAVFQIRSEVLRAARDAFRELGCTEINTPKIVATGTEGGTELFPITYFGEEAFMNQSPQLFKQLMIGSGLERVFEIGPIFRAEEHNTPRHLNEATSIDFESAFINHAEAMDACEYVVTAAYQGVAENCITELETLGLRDGFSVPDESFPRISYQEAIERINATGELDEQLVWGDDLPTDGERALGADVGSHYFITDWPSEIKPFYIKDHDDDKTLSTGFDMMHPQMELVSGGQREHRYEHLVSGFEQQGLDPEQFDYYTKMFRYGMPPHAGWGLGGERLVMTMLGLENIREAVLFPRDRQRLSP</sequence>
<keyword id="KW-0030">Aminoacyl-tRNA synthetase</keyword>
<keyword id="KW-0067">ATP-binding</keyword>
<keyword id="KW-0963">Cytoplasm</keyword>
<keyword id="KW-0436">Ligase</keyword>
<keyword id="KW-0460">Magnesium</keyword>
<keyword id="KW-0479">Metal-binding</keyword>
<keyword id="KW-0547">Nucleotide-binding</keyword>
<keyword id="KW-0648">Protein biosynthesis</keyword>
<keyword id="KW-1185">Reference proteome</keyword>
<feature type="chain" id="PRO_1000006683" description="Aspartate--tRNA(Asp/Asn) ligase">
    <location>
        <begin position="1"/>
        <end position="434"/>
    </location>
</feature>
<feature type="region of interest" description="Aspartate" evidence="1">
    <location>
        <begin position="189"/>
        <end position="192"/>
    </location>
</feature>
<feature type="binding site" evidence="1">
    <location>
        <position position="167"/>
    </location>
    <ligand>
        <name>L-aspartate</name>
        <dbReference type="ChEBI" id="CHEBI:29991"/>
    </ligand>
</feature>
<feature type="binding site" evidence="1">
    <location>
        <begin position="211"/>
        <end position="213"/>
    </location>
    <ligand>
        <name>ATP</name>
        <dbReference type="ChEBI" id="CHEBI:30616"/>
    </ligand>
</feature>
<feature type="binding site" evidence="1">
    <location>
        <position position="211"/>
    </location>
    <ligand>
        <name>L-aspartate</name>
        <dbReference type="ChEBI" id="CHEBI:29991"/>
    </ligand>
</feature>
<feature type="binding site" evidence="1">
    <location>
        <begin position="219"/>
        <end position="221"/>
    </location>
    <ligand>
        <name>ATP</name>
        <dbReference type="ChEBI" id="CHEBI:30616"/>
    </ligand>
</feature>
<feature type="binding site" evidence="1">
    <location>
        <position position="357"/>
    </location>
    <ligand>
        <name>ATP</name>
        <dbReference type="ChEBI" id="CHEBI:30616"/>
    </ligand>
</feature>
<feature type="binding site" evidence="1">
    <location>
        <position position="357"/>
    </location>
    <ligand>
        <name>Mg(2+)</name>
        <dbReference type="ChEBI" id="CHEBI:18420"/>
        <label>2</label>
    </ligand>
</feature>
<feature type="binding site" evidence="1">
    <location>
        <position position="357"/>
    </location>
    <ligand>
        <name>Mg(2+)</name>
        <dbReference type="ChEBI" id="CHEBI:18420"/>
        <label>3</label>
    </ligand>
</feature>
<feature type="binding site" evidence="1">
    <location>
        <position position="360"/>
    </location>
    <ligand>
        <name>L-aspartate</name>
        <dbReference type="ChEBI" id="CHEBI:29991"/>
    </ligand>
</feature>
<feature type="binding site" evidence="1">
    <location>
        <position position="360"/>
    </location>
    <ligand>
        <name>Mg(2+)</name>
        <dbReference type="ChEBI" id="CHEBI:18420"/>
        <label>2</label>
    </ligand>
</feature>
<feature type="binding site" evidence="1">
    <location>
        <position position="364"/>
    </location>
    <ligand>
        <name>L-aspartate</name>
        <dbReference type="ChEBI" id="CHEBI:29991"/>
    </ligand>
</feature>
<feature type="binding site" evidence="1">
    <location>
        <begin position="405"/>
        <end position="408"/>
    </location>
    <ligand>
        <name>ATP</name>
        <dbReference type="ChEBI" id="CHEBI:30616"/>
    </ligand>
</feature>
<feature type="site" description="Important for tRNA non-discrimination" evidence="1">
    <location>
        <position position="82"/>
    </location>
</feature>
<comment type="function">
    <text evidence="1">Aspartyl-tRNA synthetase with relaxed tRNA specificity since it is able to aspartylate not only its cognate tRNA(Asp) but also tRNA(Asn). Reaction proceeds in two steps: L-aspartate is first activated by ATP to form Asp-AMP and then transferred to the acceptor end of tRNA(Asp/Asn).</text>
</comment>
<comment type="catalytic activity">
    <reaction evidence="1">
        <text>tRNA(Asx) + L-aspartate + ATP = L-aspartyl-tRNA(Asx) + AMP + diphosphate</text>
        <dbReference type="Rhea" id="RHEA:18349"/>
        <dbReference type="Rhea" id="RHEA-COMP:9710"/>
        <dbReference type="Rhea" id="RHEA-COMP:9711"/>
        <dbReference type="ChEBI" id="CHEBI:29991"/>
        <dbReference type="ChEBI" id="CHEBI:30616"/>
        <dbReference type="ChEBI" id="CHEBI:33019"/>
        <dbReference type="ChEBI" id="CHEBI:78442"/>
        <dbReference type="ChEBI" id="CHEBI:78516"/>
        <dbReference type="ChEBI" id="CHEBI:456215"/>
        <dbReference type="EC" id="6.1.1.23"/>
    </reaction>
</comment>
<comment type="cofactor">
    <cofactor evidence="1">
        <name>Mg(2+)</name>
        <dbReference type="ChEBI" id="CHEBI:18420"/>
    </cofactor>
    <text evidence="1">Binds 3 Mg(2+) cations per subunit. The strongest magnesium site (Mg1) is bound to the beta- and gamma-phosphates of ATP and four water molecules complete its coordination sphere.</text>
</comment>
<comment type="subunit">
    <text evidence="1">Homodimer.</text>
</comment>
<comment type="subcellular location">
    <subcellularLocation>
        <location evidence="1">Cytoplasm</location>
    </subcellularLocation>
</comment>
<comment type="similarity">
    <text evidence="1">Belongs to the class-II aminoacyl-tRNA synthetase family. Type 2 subfamily.</text>
</comment>
<accession>Q18KP5</accession>
<reference key="1">
    <citation type="journal article" date="2006" name="BMC Genomics">
        <title>The genome of the square archaeon Haloquadratum walsbyi: life at the limits of water activity.</title>
        <authorList>
            <person name="Bolhuis H."/>
            <person name="Palm P."/>
            <person name="Wende A."/>
            <person name="Falb M."/>
            <person name="Rampp M."/>
            <person name="Rodriguez-Valera F."/>
            <person name="Pfeiffer F."/>
            <person name="Oesterhelt D."/>
        </authorList>
    </citation>
    <scope>NUCLEOTIDE SEQUENCE [LARGE SCALE GENOMIC DNA]</scope>
    <source>
        <strain>DSM 16790 / HBSQ001</strain>
    </source>
</reference>
<proteinExistence type="inferred from homology"/>
<gene>
    <name evidence="1" type="primary">aspS</name>
    <name type="ordered locus">HQ_1270A</name>
</gene>
<dbReference type="EC" id="6.1.1.23" evidence="1"/>
<dbReference type="EMBL" id="AM180088">
    <property type="protein sequence ID" value="CAJ51399.1"/>
    <property type="molecule type" value="Genomic_DNA"/>
</dbReference>
<dbReference type="RefSeq" id="WP_011570560.1">
    <property type="nucleotide sequence ID" value="NC_008212.1"/>
</dbReference>
<dbReference type="SMR" id="Q18KP5"/>
<dbReference type="STRING" id="362976.HQ_1270A"/>
<dbReference type="GeneID" id="4193746"/>
<dbReference type="KEGG" id="hwa:HQ_1270A"/>
<dbReference type="eggNOG" id="arCOG00406">
    <property type="taxonomic scope" value="Archaea"/>
</dbReference>
<dbReference type="HOGENOM" id="CLU_004553_2_1_2"/>
<dbReference type="Proteomes" id="UP000001975">
    <property type="component" value="Chromosome"/>
</dbReference>
<dbReference type="GO" id="GO:0017101">
    <property type="term" value="C:aminoacyl-tRNA synthetase multienzyme complex"/>
    <property type="evidence" value="ECO:0007669"/>
    <property type="project" value="TreeGrafter"/>
</dbReference>
<dbReference type="GO" id="GO:0005829">
    <property type="term" value="C:cytosol"/>
    <property type="evidence" value="ECO:0007669"/>
    <property type="project" value="TreeGrafter"/>
</dbReference>
<dbReference type="GO" id="GO:0004815">
    <property type="term" value="F:aspartate-tRNA ligase activity"/>
    <property type="evidence" value="ECO:0007669"/>
    <property type="project" value="UniProtKB-UniRule"/>
</dbReference>
<dbReference type="GO" id="GO:0050560">
    <property type="term" value="F:aspartate-tRNA(Asn) ligase activity"/>
    <property type="evidence" value="ECO:0007669"/>
    <property type="project" value="UniProtKB-EC"/>
</dbReference>
<dbReference type="GO" id="GO:0005524">
    <property type="term" value="F:ATP binding"/>
    <property type="evidence" value="ECO:0007669"/>
    <property type="project" value="UniProtKB-UniRule"/>
</dbReference>
<dbReference type="GO" id="GO:0000287">
    <property type="term" value="F:magnesium ion binding"/>
    <property type="evidence" value="ECO:0007669"/>
    <property type="project" value="UniProtKB-UniRule"/>
</dbReference>
<dbReference type="GO" id="GO:0003723">
    <property type="term" value="F:RNA binding"/>
    <property type="evidence" value="ECO:0007669"/>
    <property type="project" value="TreeGrafter"/>
</dbReference>
<dbReference type="GO" id="GO:0006422">
    <property type="term" value="P:aspartyl-tRNA aminoacylation"/>
    <property type="evidence" value="ECO:0007669"/>
    <property type="project" value="UniProtKB-UniRule"/>
</dbReference>
<dbReference type="CDD" id="cd00776">
    <property type="entry name" value="AsxRS_core"/>
    <property type="match status" value="1"/>
</dbReference>
<dbReference type="CDD" id="cd04316">
    <property type="entry name" value="ND_PkAspRS_like_N"/>
    <property type="match status" value="1"/>
</dbReference>
<dbReference type="FunFam" id="3.30.930.10:FF:000038">
    <property type="entry name" value="Aspartate--tRNA ligase"/>
    <property type="match status" value="1"/>
</dbReference>
<dbReference type="Gene3D" id="3.30.930.10">
    <property type="entry name" value="Bira Bifunctional Protein, Domain 2"/>
    <property type="match status" value="1"/>
</dbReference>
<dbReference type="Gene3D" id="2.40.50.140">
    <property type="entry name" value="Nucleic acid-binding proteins"/>
    <property type="match status" value="1"/>
</dbReference>
<dbReference type="HAMAP" id="MF_02075">
    <property type="entry name" value="Asp_tRNA_synth_type2"/>
    <property type="match status" value="1"/>
</dbReference>
<dbReference type="InterPro" id="IPR004364">
    <property type="entry name" value="Aa-tRNA-synt_II"/>
</dbReference>
<dbReference type="InterPro" id="IPR006195">
    <property type="entry name" value="aa-tRNA-synth_II"/>
</dbReference>
<dbReference type="InterPro" id="IPR045864">
    <property type="entry name" value="aa-tRNA-synth_II/BPL/LPL"/>
</dbReference>
<dbReference type="InterPro" id="IPR004523">
    <property type="entry name" value="Asp-tRNA_synthase_2"/>
</dbReference>
<dbReference type="InterPro" id="IPR002312">
    <property type="entry name" value="Asp/Asn-tRNA-synth_IIb"/>
</dbReference>
<dbReference type="InterPro" id="IPR012340">
    <property type="entry name" value="NA-bd_OB-fold"/>
</dbReference>
<dbReference type="InterPro" id="IPR004365">
    <property type="entry name" value="NA-bd_OB_tRNA"/>
</dbReference>
<dbReference type="NCBIfam" id="TIGR00458">
    <property type="entry name" value="aspS_nondisc"/>
    <property type="match status" value="1"/>
</dbReference>
<dbReference type="NCBIfam" id="NF003483">
    <property type="entry name" value="PRK05159.1"/>
    <property type="match status" value="1"/>
</dbReference>
<dbReference type="PANTHER" id="PTHR43450:SF1">
    <property type="entry name" value="ASPARTATE--TRNA LIGASE, CYTOPLASMIC"/>
    <property type="match status" value="1"/>
</dbReference>
<dbReference type="PANTHER" id="PTHR43450">
    <property type="entry name" value="ASPARTYL-TRNA SYNTHETASE"/>
    <property type="match status" value="1"/>
</dbReference>
<dbReference type="Pfam" id="PF00152">
    <property type="entry name" value="tRNA-synt_2"/>
    <property type="match status" value="1"/>
</dbReference>
<dbReference type="Pfam" id="PF01336">
    <property type="entry name" value="tRNA_anti-codon"/>
    <property type="match status" value="1"/>
</dbReference>
<dbReference type="PRINTS" id="PR01042">
    <property type="entry name" value="TRNASYNTHASP"/>
</dbReference>
<dbReference type="SUPFAM" id="SSF55681">
    <property type="entry name" value="Class II aaRS and biotin synthetases"/>
    <property type="match status" value="1"/>
</dbReference>
<dbReference type="SUPFAM" id="SSF50249">
    <property type="entry name" value="Nucleic acid-binding proteins"/>
    <property type="match status" value="1"/>
</dbReference>
<dbReference type="PROSITE" id="PS50862">
    <property type="entry name" value="AA_TRNA_LIGASE_II"/>
    <property type="match status" value="1"/>
</dbReference>
<name>SYDND_HALWD</name>
<protein>
    <recommendedName>
        <fullName evidence="1">Aspartate--tRNA(Asp/Asn) ligase</fullName>
        <ecNumber evidence="1">6.1.1.23</ecNumber>
    </recommendedName>
    <alternativeName>
        <fullName evidence="1">Aspartyl-tRNA synthetase</fullName>
        <shortName evidence="1">AspRS</shortName>
    </alternativeName>
    <alternativeName>
        <fullName evidence="1">Non-discriminating aspartyl-tRNA synthetase</fullName>
        <shortName evidence="1">ND-AspRS</shortName>
    </alternativeName>
</protein>